<name>BGL1B_PHACH</name>
<reference evidence="9 10" key="1">
    <citation type="journal article" date="2006" name="Appl. Microbiol. Biotechnol.">
        <title>Molecular cloning and characterization of two intracellular beta-glucosidases belonging to glycoside hydrolase family 1 from the basidiomycete Phanerochaete chrysosporium.</title>
        <authorList>
            <person name="Tsukada T."/>
            <person name="Igarashi K."/>
            <person name="Yoshida M."/>
            <person name="Samejima M."/>
        </authorList>
    </citation>
    <scope>NUCLEOTIDE SEQUENCE [MRNA]</scope>
    <scope>FUNCTION</scope>
    <scope>CATALYTIC ACTIVITY</scope>
    <scope>BIOPHYSICOCHEMICAL PROPERTIES</scope>
    <scope>INDUCTION</scope>
    <source>
        <strain evidence="10">K-3</strain>
        <tissue evidence="6">Mycelium</tissue>
    </source>
</reference>
<reference evidence="9" key="2">
    <citation type="journal article" date="2008" name="Biotechnol. Bioeng.">
        <title>Role of subsite +1 residues in pH dependence and catalytic activity of the glycoside hydrolase family 1 beta-glucosidase BGL1A from the basidiomycete Phanerochaete chrysosporium.</title>
        <authorList>
            <person name="Tsukada T."/>
            <person name="Igarashi K."/>
            <person name="Fushinobu S."/>
            <person name="Samejima M."/>
        </authorList>
    </citation>
    <scope>BIOPHYSICOCHEMICAL PROPERTIES</scope>
    <source>
        <strain evidence="7">K-3</strain>
        <tissue evidence="7">Mycelium</tissue>
    </source>
</reference>
<evidence type="ECO:0000250" key="1"/>
<evidence type="ECO:0000250" key="2">
    <source>
        <dbReference type="UniProtKB" id="Q25BW5"/>
    </source>
</evidence>
<evidence type="ECO:0000255" key="3"/>
<evidence type="ECO:0000255" key="4">
    <source>
        <dbReference type="PROSITE-ProRule" id="PRU10055"/>
    </source>
</evidence>
<evidence type="ECO:0000256" key="5">
    <source>
        <dbReference type="SAM" id="MobiDB-lite"/>
    </source>
</evidence>
<evidence type="ECO:0000269" key="6">
    <source>
    </source>
</evidence>
<evidence type="ECO:0000269" key="7">
    <source>
    </source>
</evidence>
<evidence type="ECO:0000303" key="8">
    <source>
    </source>
</evidence>
<evidence type="ECO:0000305" key="9"/>
<evidence type="ECO:0000312" key="10">
    <source>
        <dbReference type="EMBL" id="BAE87009.1"/>
    </source>
</evidence>
<dbReference type="EC" id="3.2.1.21"/>
<dbReference type="EMBL" id="AB253327">
    <property type="protein sequence ID" value="BAE87009.1"/>
    <property type="molecule type" value="mRNA"/>
</dbReference>
<dbReference type="SMR" id="Q25BW4"/>
<dbReference type="CAZy" id="GH1">
    <property type="family name" value="Glycoside Hydrolase Family 1"/>
</dbReference>
<dbReference type="VEuPathDB" id="FungiDB:AGR57_4949"/>
<dbReference type="BRENDA" id="3.2.1.21">
    <property type="organism ID" value="1380"/>
</dbReference>
<dbReference type="SABIO-RK" id="Q25BW4"/>
<dbReference type="GO" id="GO:0080079">
    <property type="term" value="F:cellobiose glucosidase activity"/>
    <property type="evidence" value="ECO:0000314"/>
    <property type="project" value="UniProtKB"/>
</dbReference>
<dbReference type="GO" id="GO:0030245">
    <property type="term" value="P:cellulose catabolic process"/>
    <property type="evidence" value="ECO:0000314"/>
    <property type="project" value="UniProtKB"/>
</dbReference>
<dbReference type="FunFam" id="3.20.20.80:FF:000011">
    <property type="entry name" value="Cytosolic beta-glucosidase"/>
    <property type="match status" value="1"/>
</dbReference>
<dbReference type="Gene3D" id="3.20.20.80">
    <property type="entry name" value="Glycosidases"/>
    <property type="match status" value="1"/>
</dbReference>
<dbReference type="InterPro" id="IPR001360">
    <property type="entry name" value="Glyco_hydro_1"/>
</dbReference>
<dbReference type="InterPro" id="IPR018120">
    <property type="entry name" value="Glyco_hydro_1_AS"/>
</dbReference>
<dbReference type="InterPro" id="IPR033132">
    <property type="entry name" value="Glyco_hydro_1_N_CS"/>
</dbReference>
<dbReference type="InterPro" id="IPR017853">
    <property type="entry name" value="Glycoside_hydrolase_SF"/>
</dbReference>
<dbReference type="PANTHER" id="PTHR10353">
    <property type="entry name" value="GLYCOSYL HYDROLASE"/>
    <property type="match status" value="1"/>
</dbReference>
<dbReference type="PANTHER" id="PTHR10353:SF36">
    <property type="entry name" value="LP05116P"/>
    <property type="match status" value="1"/>
</dbReference>
<dbReference type="Pfam" id="PF00232">
    <property type="entry name" value="Glyco_hydro_1"/>
    <property type="match status" value="1"/>
</dbReference>
<dbReference type="PRINTS" id="PR00131">
    <property type="entry name" value="GLHYDRLASE1"/>
</dbReference>
<dbReference type="SUPFAM" id="SSF51445">
    <property type="entry name" value="(Trans)glycosidases"/>
    <property type="match status" value="1"/>
</dbReference>
<dbReference type="PROSITE" id="PS00572">
    <property type="entry name" value="GLYCOSYL_HYDROL_F1_1"/>
    <property type="match status" value="1"/>
</dbReference>
<dbReference type="PROSITE" id="PS00653">
    <property type="entry name" value="GLYCOSYL_HYDROL_F1_2"/>
    <property type="match status" value="1"/>
</dbReference>
<gene>
    <name evidence="10" type="primary">BGL1B</name>
</gene>
<protein>
    <recommendedName>
        <fullName evidence="8 10">Beta-glucosidase 1B</fullName>
        <ecNumber>3.2.1.21</ecNumber>
    </recommendedName>
    <alternativeName>
        <fullName evidence="8">Cellobiase 1B</fullName>
    </alternativeName>
</protein>
<sequence length="540" mass="60665">MSASAAPPNKLPADFLWGFATASFQIEGATDVDGRGKSIWDDFSKIPGKTLDGKNGDVATDSYNRWREDVDLLVQYGVKSYRFSISWSRIIPLGGRNDPVNEAGIKFYSDLIDALLERGIVPFVTLYHWDLPQALHDRYLGWLNKDEIVQDYVRYAGVCFERFGDRVKHWLTMNEPWCISILGYGRGVFAPGRSSDRMRSPEGDSSTEPWIVGHSVILAHAYAVKLYREQFKANRGGQIGITLNGDWAMPYDDSPQNIEAAQHALDVAIGWFADPIYLGQYPAYMKEMLGDRLPEFTPEELAVVKGSSDFYGMNTYTTNLCKAGGEDEFQGNVEYTFTRPDGTQLGTAAHCSWLQDYAPGFRDLLNYLYKRYRKPIYVTENGFAVKDENSKPLEEALKDDDRVHYYQGVTDSLLAAVKEDGVDVRGYFGWSLLDNFEWADGYITRFGVTYVDYDTQKRYPKDSGKFLSQWFPAHIAESPKPAAETKKAATPSPLKPHGAISNGVSKKSSATKEPKSASRKKGRKAPFARFTAYISAFLGL</sequence>
<organism>
    <name type="scientific">Phanerodontia chrysosporium</name>
    <name type="common">White-rot fungus</name>
    <name type="synonym">Sporotrichum pruinosum</name>
    <dbReference type="NCBI Taxonomy" id="2822231"/>
    <lineage>
        <taxon>Eukaryota</taxon>
        <taxon>Fungi</taxon>
        <taxon>Dikarya</taxon>
        <taxon>Basidiomycota</taxon>
        <taxon>Agaricomycotina</taxon>
        <taxon>Agaricomycetes</taxon>
        <taxon>Polyporales</taxon>
        <taxon>Phanerochaetaceae</taxon>
        <taxon>Phanerodontia</taxon>
    </lineage>
</organism>
<feature type="chain" id="PRO_0000390788" description="Beta-glucosidase 1B">
    <location>
        <begin position="1"/>
        <end position="540"/>
    </location>
</feature>
<feature type="region of interest" description="Disordered" evidence="5">
    <location>
        <begin position="481"/>
        <end position="524"/>
    </location>
</feature>
<feature type="compositionally biased region" description="Low complexity" evidence="5">
    <location>
        <begin position="481"/>
        <end position="492"/>
    </location>
</feature>
<feature type="active site" description="Proton donor" evidence="2">
    <location>
        <position position="175"/>
    </location>
</feature>
<feature type="active site" description="Nucleophile" evidence="2 4">
    <location>
        <position position="380"/>
    </location>
</feature>
<feature type="binding site" evidence="1">
    <location>
        <position position="25"/>
    </location>
    <ligand>
        <name>substrate</name>
    </ligand>
</feature>
<feature type="binding site" evidence="1">
    <location>
        <position position="128"/>
    </location>
    <ligand>
        <name>substrate</name>
    </ligand>
</feature>
<feature type="binding site" evidence="1">
    <location>
        <position position="174"/>
    </location>
    <ligand>
        <name>substrate</name>
    </ligand>
</feature>
<feature type="binding site" evidence="2">
    <location>
        <position position="316"/>
    </location>
    <ligand>
        <name>substrate</name>
    </ligand>
</feature>
<feature type="binding site" evidence="2">
    <location>
        <position position="430"/>
    </location>
    <ligand>
        <name>substrate</name>
    </ligand>
</feature>
<feature type="binding site" evidence="1">
    <location>
        <begin position="437"/>
        <end position="438"/>
    </location>
    <ligand>
        <name>substrate</name>
    </ligand>
</feature>
<accession>Q25BW4</accession>
<keyword id="KW-0119">Carbohydrate metabolism</keyword>
<keyword id="KW-0136">Cellulose degradation</keyword>
<keyword id="KW-0326">Glycosidase</keyword>
<keyword id="KW-0378">Hydrolase</keyword>
<keyword id="KW-0624">Polysaccharide degradation</keyword>
<comment type="function">
    <text evidence="6">Plays an important role in cellulose degradation. Shows hydrolytic activity against several glycosidic compounds.</text>
</comment>
<comment type="catalytic activity">
    <reaction evidence="6">
        <text>Hydrolysis of terminal, non-reducing beta-D-glucosyl residues with release of beta-D-glucose.</text>
        <dbReference type="EC" id="3.2.1.21"/>
    </reaction>
</comment>
<comment type="biophysicochemical properties">
    <kinetics>
        <KM evidence="6 7">0.218 mM for cellobiose</KM>
        <KM evidence="6 7">0.619 mM for p-nitrophenyl-beta-D-glucoside (pNP-Glu)</KM>
        <KM evidence="6 7">4.02 mM for p-nitrophenyl-beta-D-galactoside (pNP-Gal)</KM>
        <KM evidence="6 7">1.07 mM for cellobionolactone</KM>
    </kinetics>
    <phDependence>
        <text evidence="6 7">Optimum pH is 6.0-6.5.</text>
    </phDependence>
</comment>
<comment type="induction">
    <text evidence="6">Expressed in cellobiose culture, but repressed in glucose culture.</text>
</comment>
<comment type="similarity">
    <text evidence="3">Belongs to the glycosyl hydrolase 1 family.</text>
</comment>
<proteinExistence type="evidence at protein level"/>